<name>CALR_RICCO</name>
<feature type="signal peptide" evidence="3">
    <location>
        <begin position="1"/>
        <end position="20"/>
    </location>
</feature>
<feature type="chain" id="PRO_0000004195" description="Calreticulin">
    <location>
        <begin position="21"/>
        <end position="415"/>
    </location>
</feature>
<feature type="repeat" description="1-1">
    <location>
        <begin position="192"/>
        <end position="203"/>
    </location>
</feature>
<feature type="repeat" description="1-2">
    <location>
        <begin position="211"/>
        <end position="222"/>
    </location>
</feature>
<feature type="repeat" description="1-3">
    <location>
        <begin position="228"/>
        <end position="239"/>
    </location>
</feature>
<feature type="repeat" description="1-4">
    <location>
        <begin position="246"/>
        <end position="257"/>
    </location>
</feature>
<feature type="repeat" description="2-1">
    <location>
        <begin position="261"/>
        <end position="271"/>
    </location>
</feature>
<feature type="repeat" description="2-2">
    <location>
        <begin position="275"/>
        <end position="285"/>
    </location>
</feature>
<feature type="repeat" description="2-3">
    <location>
        <begin position="289"/>
        <end position="299"/>
    </location>
</feature>
<feature type="region of interest" description="4 X approximate repeats">
    <location>
        <begin position="192"/>
        <end position="257"/>
    </location>
</feature>
<feature type="region of interest" description="Disordered" evidence="5">
    <location>
        <begin position="208"/>
        <end position="276"/>
    </location>
</feature>
<feature type="region of interest" description="3 X approximate repeats">
    <location>
        <begin position="261"/>
        <end position="299"/>
    </location>
</feature>
<feature type="region of interest" description="Disordered" evidence="5">
    <location>
        <begin position="347"/>
        <end position="415"/>
    </location>
</feature>
<feature type="short sequence motif" description="Prevents secretion from ER" evidence="4">
    <location>
        <begin position="412"/>
        <end position="415"/>
    </location>
</feature>
<feature type="compositionally biased region" description="Basic and acidic residues" evidence="5">
    <location>
        <begin position="208"/>
        <end position="253"/>
    </location>
</feature>
<feature type="compositionally biased region" description="Basic and acidic residues" evidence="5">
    <location>
        <begin position="347"/>
        <end position="376"/>
    </location>
</feature>
<feature type="compositionally biased region" description="Acidic residues" evidence="5">
    <location>
        <begin position="377"/>
        <end position="397"/>
    </location>
</feature>
<feature type="compositionally biased region" description="Acidic residues" evidence="5">
    <location>
        <begin position="404"/>
        <end position="415"/>
    </location>
</feature>
<feature type="binding site" evidence="2">
    <location>
        <position position="110"/>
    </location>
    <ligand>
        <name>an alpha-D-glucoside</name>
        <dbReference type="ChEBI" id="CHEBI:22390"/>
    </ligand>
</feature>
<feature type="binding site" evidence="2">
    <location>
        <position position="112"/>
    </location>
    <ligand>
        <name>an alpha-D-glucoside</name>
        <dbReference type="ChEBI" id="CHEBI:22390"/>
    </ligand>
</feature>
<feature type="binding site" evidence="2">
    <location>
        <position position="129"/>
    </location>
    <ligand>
        <name>an alpha-D-glucoside</name>
        <dbReference type="ChEBI" id="CHEBI:22390"/>
    </ligand>
</feature>
<feature type="binding site" evidence="2">
    <location>
        <position position="136"/>
    </location>
    <ligand>
        <name>an alpha-D-glucoside</name>
        <dbReference type="ChEBI" id="CHEBI:22390"/>
    </ligand>
</feature>
<feature type="binding site" evidence="2">
    <location>
        <position position="319"/>
    </location>
    <ligand>
        <name>an alpha-D-glucoside</name>
        <dbReference type="ChEBI" id="CHEBI:22390"/>
    </ligand>
</feature>
<feature type="glycosylation site" description="N-linked (GlcNAc...) asparagine" evidence="3">
    <location>
        <position position="52"/>
    </location>
</feature>
<feature type="glycosylation site" description="N-linked (GlcNAc...) asparagine" evidence="3">
    <location>
        <position position="152"/>
    </location>
</feature>
<feature type="disulfide bond" evidence="1">
    <location>
        <begin position="106"/>
        <end position="138"/>
    </location>
</feature>
<comment type="function">
    <text evidence="1">Molecular calcium-binding chaperone promoting folding, oligomeric assembly and quality control in the ER via the calreticulin/calnexin cycle. This lectin may interact transiently with almost all of the monoglucosylated glycoproteins that are synthesized in the ER (By similarity).</text>
</comment>
<comment type="subcellular location">
    <subcellularLocation>
        <location>Endoplasmic reticulum lumen</location>
    </subcellularLocation>
</comment>
<comment type="domain">
    <text evidence="1">Can be divided into a N-terminal globular domain, a proline-rich P-domain forming an elongated arm-like structure and a C-terminal acidic domain. The P-domain binds one molecule of calcium with high affinity, whereas the acidic C-domain binds multiple calcium ions with low affinity (By similarity).</text>
</comment>
<comment type="domain">
    <text evidence="1">The interaction with glycans occurs through a binding site in the globular lectin domain.</text>
</comment>
<comment type="domain">
    <text evidence="1">The zinc binding sites are localized to the N-domain.</text>
</comment>
<comment type="similarity">
    <text evidence="6">Belongs to the calreticulin family.</text>
</comment>
<accession>P93508</accession>
<dbReference type="EMBL" id="U74631">
    <property type="protein sequence ID" value="AAB71420.1"/>
    <property type="molecule type" value="Genomic_DNA"/>
</dbReference>
<dbReference type="EMBL" id="U74630">
    <property type="protein sequence ID" value="AAB71419.1"/>
    <property type="molecule type" value="mRNA"/>
</dbReference>
<dbReference type="PIR" id="T10172">
    <property type="entry name" value="T10172"/>
</dbReference>
<dbReference type="RefSeq" id="NP_001310652.1">
    <property type="nucleotide sequence ID" value="NM_001323723.1"/>
</dbReference>
<dbReference type="SMR" id="P93508"/>
<dbReference type="GeneID" id="8269812"/>
<dbReference type="KEGG" id="rcu:8269812"/>
<dbReference type="eggNOG" id="KOG0674">
    <property type="taxonomic scope" value="Eukaryota"/>
</dbReference>
<dbReference type="OMA" id="KRDEICA"/>
<dbReference type="OrthoDB" id="1938156at2759"/>
<dbReference type="GO" id="GO:0005788">
    <property type="term" value="C:endoplasmic reticulum lumen"/>
    <property type="evidence" value="ECO:0000314"/>
    <property type="project" value="UniProtKB"/>
</dbReference>
<dbReference type="GO" id="GO:0005509">
    <property type="term" value="F:calcium ion binding"/>
    <property type="evidence" value="ECO:0007669"/>
    <property type="project" value="InterPro"/>
</dbReference>
<dbReference type="GO" id="GO:0030246">
    <property type="term" value="F:carbohydrate binding"/>
    <property type="evidence" value="ECO:0007669"/>
    <property type="project" value="UniProtKB-KW"/>
</dbReference>
<dbReference type="GO" id="GO:0051082">
    <property type="term" value="F:unfolded protein binding"/>
    <property type="evidence" value="ECO:0007669"/>
    <property type="project" value="InterPro"/>
</dbReference>
<dbReference type="GO" id="GO:0006457">
    <property type="term" value="P:protein folding"/>
    <property type="evidence" value="ECO:0007669"/>
    <property type="project" value="InterPro"/>
</dbReference>
<dbReference type="FunFam" id="2.10.250.10:FF:000002">
    <property type="entry name" value="Calreticulin"/>
    <property type="match status" value="1"/>
</dbReference>
<dbReference type="FunFam" id="2.60.120.200:FF:000018">
    <property type="entry name" value="Calreticulin 1b"/>
    <property type="match status" value="1"/>
</dbReference>
<dbReference type="FunFam" id="2.60.120.200:FF:000339">
    <property type="entry name" value="Calreticulin 3"/>
    <property type="match status" value="1"/>
</dbReference>
<dbReference type="Gene3D" id="2.60.120.200">
    <property type="match status" value="1"/>
</dbReference>
<dbReference type="Gene3D" id="2.10.250.10">
    <property type="entry name" value="Calreticulin/calnexin, P domain"/>
    <property type="match status" value="1"/>
</dbReference>
<dbReference type="InterPro" id="IPR001580">
    <property type="entry name" value="Calret/calnex"/>
</dbReference>
<dbReference type="InterPro" id="IPR018124">
    <property type="entry name" value="Calret/calnex_CS"/>
</dbReference>
<dbReference type="InterPro" id="IPR009169">
    <property type="entry name" value="Calreticulin"/>
</dbReference>
<dbReference type="InterPro" id="IPR009033">
    <property type="entry name" value="Calreticulin/calnexin_P_dom_sf"/>
</dbReference>
<dbReference type="InterPro" id="IPR013320">
    <property type="entry name" value="ConA-like_dom_sf"/>
</dbReference>
<dbReference type="PANTHER" id="PTHR11073:SF2">
    <property type="entry name" value="CALRETICULIN"/>
    <property type="match status" value="1"/>
</dbReference>
<dbReference type="PANTHER" id="PTHR11073">
    <property type="entry name" value="CALRETICULIN AND CALNEXIN"/>
    <property type="match status" value="1"/>
</dbReference>
<dbReference type="Pfam" id="PF00262">
    <property type="entry name" value="Calreticulin"/>
    <property type="match status" value="2"/>
</dbReference>
<dbReference type="PIRSF" id="PIRSF002356">
    <property type="entry name" value="Calreticulin"/>
    <property type="match status" value="1"/>
</dbReference>
<dbReference type="PRINTS" id="PR00626">
    <property type="entry name" value="CALRETICULIN"/>
</dbReference>
<dbReference type="SUPFAM" id="SSF49899">
    <property type="entry name" value="Concanavalin A-like lectins/glucanases"/>
    <property type="match status" value="1"/>
</dbReference>
<dbReference type="SUPFAM" id="SSF63887">
    <property type="entry name" value="P-domain of calnexin/calreticulin"/>
    <property type="match status" value="1"/>
</dbReference>
<dbReference type="PROSITE" id="PS00803">
    <property type="entry name" value="CALRETICULIN_1"/>
    <property type="match status" value="1"/>
</dbReference>
<dbReference type="PROSITE" id="PS00804">
    <property type="entry name" value="CALRETICULIN_2"/>
    <property type="match status" value="1"/>
</dbReference>
<dbReference type="PROSITE" id="PS00805">
    <property type="entry name" value="CALRETICULIN_REPEAT"/>
    <property type="match status" value="2"/>
</dbReference>
<dbReference type="PROSITE" id="PS00014">
    <property type="entry name" value="ER_TARGET"/>
    <property type="match status" value="1"/>
</dbReference>
<proteinExistence type="evidence at transcript level"/>
<evidence type="ECO:0000250" key="1"/>
<evidence type="ECO:0000250" key="2">
    <source>
        <dbReference type="UniProtKB" id="P14211"/>
    </source>
</evidence>
<evidence type="ECO:0000255" key="3"/>
<evidence type="ECO:0000255" key="4">
    <source>
        <dbReference type="PROSITE-ProRule" id="PRU10138"/>
    </source>
</evidence>
<evidence type="ECO:0000256" key="5">
    <source>
        <dbReference type="SAM" id="MobiDB-lite"/>
    </source>
</evidence>
<evidence type="ECO:0000305" key="6"/>
<keyword id="KW-0106">Calcium</keyword>
<keyword id="KW-0143">Chaperone</keyword>
<keyword id="KW-1015">Disulfide bond</keyword>
<keyword id="KW-0256">Endoplasmic reticulum</keyword>
<keyword id="KW-0325">Glycoprotein</keyword>
<keyword id="KW-0430">Lectin</keyword>
<keyword id="KW-0479">Metal-binding</keyword>
<keyword id="KW-0677">Repeat</keyword>
<keyword id="KW-0732">Signal</keyword>
<keyword id="KW-0862">Zinc</keyword>
<sequence length="415" mass="47522">MANPKSLSLFLLSLLAIASAEVFFEERFEDGWENRWVKSDWKKDENTAGEWNYTSGKWNGDPNDKGIQTSEDYRFYAISAEFPEFSNKDKTLVFQFSVKHEQKLDCGGGYMKLLSSSTDQKKFGGDTPYSIMFGPDICGYSTKKVHAILNYNDTNHLIKKEVPCETDQLTHVYTLVIRPDATYSILIDNVEKQTGSLYTDWDLLPPKKIKDPEAKKPEDWDEKEYIPDPEDKKPEGYDDIPKEIPDPDAKKPEDWDDEEDGEWTAPTIANPEYKGPWKPKKIKNPNYKGKWKAPMIDNPDFKDDPEIYVYPNLKYVGIELWQVKSGTLFDNVLICNDPEYAKQLAEETWGKNKDAEKAAFEEAEKKKEEEESKDDPADSDADEDDDDADDTEGEDDGESKSDAAEDSAEDVHDEL</sequence>
<protein>
    <recommendedName>
        <fullName>Calreticulin</fullName>
    </recommendedName>
</protein>
<reference key="1">
    <citation type="journal article" date="1997" name="Plant Mol. Biol.">
        <title>Cloning and characterization of the calreticulin gene from Ricinus communis L.</title>
        <authorList>
            <person name="Coughlan S.J."/>
            <person name="Hastings C."/>
            <person name="Winfrey R. Jr."/>
        </authorList>
    </citation>
    <scope>NUCLEOTIDE SEQUENCE [GENOMIC DNA / MRNA]</scope>
</reference>
<organism>
    <name type="scientific">Ricinus communis</name>
    <name type="common">Castor bean</name>
    <dbReference type="NCBI Taxonomy" id="3988"/>
    <lineage>
        <taxon>Eukaryota</taxon>
        <taxon>Viridiplantae</taxon>
        <taxon>Streptophyta</taxon>
        <taxon>Embryophyta</taxon>
        <taxon>Tracheophyta</taxon>
        <taxon>Spermatophyta</taxon>
        <taxon>Magnoliopsida</taxon>
        <taxon>eudicotyledons</taxon>
        <taxon>Gunneridae</taxon>
        <taxon>Pentapetalae</taxon>
        <taxon>rosids</taxon>
        <taxon>fabids</taxon>
        <taxon>Malpighiales</taxon>
        <taxon>Euphorbiaceae</taxon>
        <taxon>Acalyphoideae</taxon>
        <taxon>Acalypheae</taxon>
        <taxon>Ricinus</taxon>
    </lineage>
</organism>